<organism>
    <name type="scientific">Enterococcus faecalis (strain ATCC 700802 / V583)</name>
    <dbReference type="NCBI Taxonomy" id="226185"/>
    <lineage>
        <taxon>Bacteria</taxon>
        <taxon>Bacillati</taxon>
        <taxon>Bacillota</taxon>
        <taxon>Bacilli</taxon>
        <taxon>Lactobacillales</taxon>
        <taxon>Enterococcaceae</taxon>
        <taxon>Enterococcus</taxon>
    </lineage>
</organism>
<proteinExistence type="inferred from homology"/>
<keyword id="KW-1185">Reference proteome</keyword>
<sequence>MTEHNHDHDHEGHEHITLVDEQGNETLYEILLTVDGQEEFGKNYVLLYPAGIPEDEDVELQAYSYVENAEGTEGDLQQIETDAEWDMIEEVFNTFMAEEEE</sequence>
<accession>Q836B1</accession>
<dbReference type="EMBL" id="AE016830">
    <property type="protein sequence ID" value="AAO81003.1"/>
    <property type="molecule type" value="Genomic_DNA"/>
</dbReference>
<dbReference type="RefSeq" id="NP_814933.1">
    <property type="nucleotide sequence ID" value="NC_004668.1"/>
</dbReference>
<dbReference type="RefSeq" id="WP_002357933.1">
    <property type="nucleotide sequence ID" value="NZ_KE136528.1"/>
</dbReference>
<dbReference type="STRING" id="226185.EF_1204"/>
<dbReference type="DNASU" id="1200105"/>
<dbReference type="EnsemblBacteria" id="AAO81003">
    <property type="protein sequence ID" value="AAO81003"/>
    <property type="gene ID" value="EF_1204"/>
</dbReference>
<dbReference type="KEGG" id="efa:EF1204"/>
<dbReference type="PATRIC" id="fig|226185.45.peg.2294"/>
<dbReference type="eggNOG" id="COG3906">
    <property type="taxonomic scope" value="Bacteria"/>
</dbReference>
<dbReference type="HOGENOM" id="CLU_146610_2_1_9"/>
<dbReference type="Proteomes" id="UP000001415">
    <property type="component" value="Chromosome"/>
</dbReference>
<dbReference type="HAMAP" id="MF_01448">
    <property type="entry name" value="UPF0473"/>
    <property type="match status" value="1"/>
</dbReference>
<dbReference type="InterPro" id="IPR009711">
    <property type="entry name" value="UPF0473"/>
</dbReference>
<dbReference type="NCBIfam" id="NF010215">
    <property type="entry name" value="PRK13678.1-2"/>
    <property type="match status" value="1"/>
</dbReference>
<dbReference type="NCBIfam" id="NF010217">
    <property type="entry name" value="PRK13678.1-4"/>
    <property type="match status" value="1"/>
</dbReference>
<dbReference type="PANTHER" id="PTHR40066">
    <property type="entry name" value="UPF0473 PROTEIN CBO2561/CLC_2432"/>
    <property type="match status" value="1"/>
</dbReference>
<dbReference type="PANTHER" id="PTHR40066:SF1">
    <property type="entry name" value="UPF0473 PROTEIN CBO2561_CLC_2432"/>
    <property type="match status" value="1"/>
</dbReference>
<dbReference type="Pfam" id="PF06949">
    <property type="entry name" value="DUF1292"/>
    <property type="match status" value="1"/>
</dbReference>
<feature type="chain" id="PRO_0000304829" description="UPF0473 protein EF_1204">
    <location>
        <begin position="1"/>
        <end position="101"/>
    </location>
</feature>
<reference key="1">
    <citation type="journal article" date="2003" name="Science">
        <title>Role of mobile DNA in the evolution of vancomycin-resistant Enterococcus faecalis.</title>
        <authorList>
            <person name="Paulsen I.T."/>
            <person name="Banerjei L."/>
            <person name="Myers G.S.A."/>
            <person name="Nelson K.E."/>
            <person name="Seshadri R."/>
            <person name="Read T.D."/>
            <person name="Fouts D.E."/>
            <person name="Eisen J.A."/>
            <person name="Gill S.R."/>
            <person name="Heidelberg J.F."/>
            <person name="Tettelin H."/>
            <person name="Dodson R.J."/>
            <person name="Umayam L.A."/>
            <person name="Brinkac L.M."/>
            <person name="Beanan M.J."/>
            <person name="Daugherty S.C."/>
            <person name="DeBoy R.T."/>
            <person name="Durkin S.A."/>
            <person name="Kolonay J.F."/>
            <person name="Madupu R."/>
            <person name="Nelson W.C."/>
            <person name="Vamathevan J.J."/>
            <person name="Tran B."/>
            <person name="Upton J."/>
            <person name="Hansen T."/>
            <person name="Shetty J."/>
            <person name="Khouri H.M."/>
            <person name="Utterback T.R."/>
            <person name="Radune D."/>
            <person name="Ketchum K.A."/>
            <person name="Dougherty B.A."/>
            <person name="Fraser C.M."/>
        </authorList>
    </citation>
    <scope>NUCLEOTIDE SEQUENCE [LARGE SCALE GENOMIC DNA]</scope>
    <source>
        <strain>ATCC 700802 / V583</strain>
    </source>
</reference>
<name>Y1204_ENTFA</name>
<protein>
    <recommendedName>
        <fullName evidence="1">UPF0473 protein EF_1204</fullName>
    </recommendedName>
</protein>
<evidence type="ECO:0000255" key="1">
    <source>
        <dbReference type="HAMAP-Rule" id="MF_01448"/>
    </source>
</evidence>
<gene>
    <name type="ordered locus">EF_1204</name>
</gene>
<comment type="similarity">
    <text evidence="1">Belongs to the UPF0473 family.</text>
</comment>